<evidence type="ECO:0000250" key="1"/>
<evidence type="ECO:0000250" key="2">
    <source>
        <dbReference type="UniProtKB" id="Q99633"/>
    </source>
</evidence>
<evidence type="ECO:0000305" key="3"/>
<sequence>MDILKSEILRKRQLVEDRNLLVENKKYFKRSELAKKEEEAYFERCGYRIQPKEEDQKPLTSSNPVLELELAEEKLPMTLSRQEVIRRLRERGEPIRLFGETDYDAFQRLRKIEILTPEVNKGLRNDLKAALDKIDQQYLNEIVGGQEPGEEDTQNDLKVHEENTTIEELEALGESLGKGDDHKDMDIITKFLKFLLGVWAKELNAREDYVKRSVQGKLNSATQKQTESYLRPLFRKLRKRNLPADIKESITDIIKFMLQREYVKANDAYLQMAIGNAPWPIGVTMVGIHARTGREKIFSKHVAHVLNDETQRKYIQGLKRLMTICQKHFPTDPSKCVEYNAL</sequence>
<accession>Q5RE03</accession>
<organism>
    <name type="scientific">Pongo abelii</name>
    <name type="common">Sumatran orangutan</name>
    <name type="synonym">Pongo pygmaeus abelii</name>
    <dbReference type="NCBI Taxonomy" id="9601"/>
    <lineage>
        <taxon>Eukaryota</taxon>
        <taxon>Metazoa</taxon>
        <taxon>Chordata</taxon>
        <taxon>Craniata</taxon>
        <taxon>Vertebrata</taxon>
        <taxon>Euteleostomi</taxon>
        <taxon>Mammalia</taxon>
        <taxon>Eutheria</taxon>
        <taxon>Euarchontoglires</taxon>
        <taxon>Primates</taxon>
        <taxon>Haplorrhini</taxon>
        <taxon>Catarrhini</taxon>
        <taxon>Hominidae</taxon>
        <taxon>Pongo</taxon>
    </lineage>
</organism>
<comment type="function">
    <text evidence="1">Participates in the second step of pre-mRNA splicing.</text>
</comment>
<comment type="subunit">
    <text evidence="1">Heterodimer with PPIH. Interacts with PRPF4 and with the spliceosome. Part of a complex containing U4/U6 snRNPs (By similarity).</text>
</comment>
<comment type="subcellular location">
    <subcellularLocation>
        <location evidence="1">Nucleus speckle</location>
    </subcellularLocation>
    <text evidence="1">Colocalizes with spliceosomal snRNPs.</text>
</comment>
<comment type="similarity">
    <text evidence="3">Belongs to the PRP18 family.</text>
</comment>
<keyword id="KW-0007">Acetylation</keyword>
<keyword id="KW-0507">mRNA processing</keyword>
<keyword id="KW-0508">mRNA splicing</keyword>
<keyword id="KW-0539">Nucleus</keyword>
<keyword id="KW-1185">Reference proteome</keyword>
<keyword id="KW-0747">Spliceosome</keyword>
<feature type="chain" id="PRO_0000324100" description="Pre-mRNA-splicing factor 18">
    <location>
        <begin position="1"/>
        <end position="342"/>
    </location>
</feature>
<feature type="modified residue" description="N-acetylmethionine" evidence="2">
    <location>
        <position position="1"/>
    </location>
</feature>
<name>PRP18_PONAB</name>
<dbReference type="EMBL" id="CR857737">
    <property type="protein sequence ID" value="CAH90004.1"/>
    <property type="molecule type" value="mRNA"/>
</dbReference>
<dbReference type="RefSeq" id="NP_001124950.1">
    <property type="nucleotide sequence ID" value="NM_001131478.2"/>
</dbReference>
<dbReference type="BMRB" id="Q5RE03"/>
<dbReference type="SMR" id="Q5RE03"/>
<dbReference type="FunCoup" id="Q5RE03">
    <property type="interactions" value="3177"/>
</dbReference>
<dbReference type="STRING" id="9601.ENSPPYP00000002439"/>
<dbReference type="Ensembl" id="ENSPPYT00000002513.2">
    <property type="protein sequence ID" value="ENSPPYP00000002439.1"/>
    <property type="gene ID" value="ENSPPYG00000002101.2"/>
</dbReference>
<dbReference type="GeneID" id="100171822"/>
<dbReference type="KEGG" id="pon:100171822"/>
<dbReference type="CTD" id="8559"/>
<dbReference type="eggNOG" id="KOG2808">
    <property type="taxonomic scope" value="Eukaryota"/>
</dbReference>
<dbReference type="GeneTree" id="ENSGT00390000015073"/>
<dbReference type="HOGENOM" id="CLU_039675_0_1_1"/>
<dbReference type="InParanoid" id="Q5RE03"/>
<dbReference type="OMA" id="SFAQVRW"/>
<dbReference type="OrthoDB" id="10261918at2759"/>
<dbReference type="TreeFam" id="TF315049"/>
<dbReference type="Proteomes" id="UP000001595">
    <property type="component" value="Chromosome 10"/>
</dbReference>
<dbReference type="GO" id="GO:0016607">
    <property type="term" value="C:nuclear speck"/>
    <property type="evidence" value="ECO:0007669"/>
    <property type="project" value="UniProtKB-SubCell"/>
</dbReference>
<dbReference type="GO" id="GO:0071021">
    <property type="term" value="C:U2-type post-spliceosomal complex"/>
    <property type="evidence" value="ECO:0007669"/>
    <property type="project" value="TreeGrafter"/>
</dbReference>
<dbReference type="GO" id="GO:0046540">
    <property type="term" value="C:U4/U6 x U5 tri-snRNP complex"/>
    <property type="evidence" value="ECO:0007669"/>
    <property type="project" value="TreeGrafter"/>
</dbReference>
<dbReference type="GO" id="GO:0005682">
    <property type="term" value="C:U5 snRNP"/>
    <property type="evidence" value="ECO:0007669"/>
    <property type="project" value="TreeGrafter"/>
</dbReference>
<dbReference type="GO" id="GO:0000350">
    <property type="term" value="P:generation of catalytic spliceosome for second transesterification step"/>
    <property type="evidence" value="ECO:0007669"/>
    <property type="project" value="TreeGrafter"/>
</dbReference>
<dbReference type="FunFam" id="1.20.940.10:FF:000002">
    <property type="entry name" value="Pre-mRNA processing factor 18"/>
    <property type="match status" value="1"/>
</dbReference>
<dbReference type="FunFam" id="4.10.280.110:FF:000001">
    <property type="entry name" value="pre-mRNA-splicing factor 18 isoform X2"/>
    <property type="match status" value="1"/>
</dbReference>
<dbReference type="Gene3D" id="1.20.940.10">
    <property type="entry name" value="Functional domain of the splicing factor Prp18"/>
    <property type="match status" value="1"/>
</dbReference>
<dbReference type="Gene3D" id="4.10.280.110">
    <property type="entry name" value="Pre-mRNA processing factor 4 domain"/>
    <property type="match status" value="1"/>
</dbReference>
<dbReference type="InterPro" id="IPR004098">
    <property type="entry name" value="Prp18"/>
</dbReference>
<dbReference type="InterPro" id="IPR014906">
    <property type="entry name" value="PRP4-like"/>
</dbReference>
<dbReference type="InterPro" id="IPR036285">
    <property type="entry name" value="PRP4-like_sf"/>
</dbReference>
<dbReference type="InterPro" id="IPR039979">
    <property type="entry name" value="PRPF18"/>
</dbReference>
<dbReference type="PANTHER" id="PTHR13007">
    <property type="entry name" value="PRE-MRNA SPLICING FACTOR-RELATED"/>
    <property type="match status" value="1"/>
</dbReference>
<dbReference type="PANTHER" id="PTHR13007:SF19">
    <property type="entry name" value="PRE-MRNA-SPLICING FACTOR 18"/>
    <property type="match status" value="1"/>
</dbReference>
<dbReference type="Pfam" id="PF02840">
    <property type="entry name" value="Prp18"/>
    <property type="match status" value="1"/>
</dbReference>
<dbReference type="Pfam" id="PF08799">
    <property type="entry name" value="PRP4"/>
    <property type="match status" value="1"/>
</dbReference>
<dbReference type="SMART" id="SM00500">
    <property type="entry name" value="SFM"/>
    <property type="match status" value="1"/>
</dbReference>
<dbReference type="SUPFAM" id="SSF47938">
    <property type="entry name" value="Functional domain of the splicing factor Prp18"/>
    <property type="match status" value="1"/>
</dbReference>
<dbReference type="SUPFAM" id="SSF158230">
    <property type="entry name" value="PRP4-like"/>
    <property type="match status" value="1"/>
</dbReference>
<proteinExistence type="evidence at transcript level"/>
<gene>
    <name type="primary">PRPF18</name>
</gene>
<protein>
    <recommendedName>
        <fullName>Pre-mRNA-splicing factor 18</fullName>
    </recommendedName>
    <alternativeName>
        <fullName>PRP18 homolog</fullName>
    </alternativeName>
</protein>
<reference key="1">
    <citation type="submission" date="2004-11" db="EMBL/GenBank/DDBJ databases">
        <authorList>
            <consortium name="The German cDNA consortium"/>
        </authorList>
    </citation>
    <scope>NUCLEOTIDE SEQUENCE [LARGE SCALE MRNA]</scope>
    <source>
        <tissue>Kidney</tissue>
    </source>
</reference>